<name>RL19_AMOA5</name>
<evidence type="ECO:0000255" key="1">
    <source>
        <dbReference type="HAMAP-Rule" id="MF_00402"/>
    </source>
</evidence>
<evidence type="ECO:0000305" key="2"/>
<comment type="function">
    <text evidence="1">This protein is located at the 30S-50S ribosomal subunit interface and may play a role in the structure and function of the aminoacyl-tRNA binding site.</text>
</comment>
<comment type="similarity">
    <text evidence="1">Belongs to the bacterial ribosomal protein bL19 family.</text>
</comment>
<protein>
    <recommendedName>
        <fullName evidence="1">Large ribosomal subunit protein bL19</fullName>
    </recommendedName>
    <alternativeName>
        <fullName evidence="2">50S ribosomal protein L19</fullName>
    </alternativeName>
</protein>
<proteinExistence type="inferred from homology"/>
<dbReference type="EMBL" id="CP001102">
    <property type="protein sequence ID" value="ACE06295.1"/>
    <property type="molecule type" value="Genomic_DNA"/>
</dbReference>
<dbReference type="RefSeq" id="WP_012473062.1">
    <property type="nucleotide sequence ID" value="NC_010830.1"/>
</dbReference>
<dbReference type="SMR" id="B3ESU3"/>
<dbReference type="STRING" id="452471.Aasi_0930"/>
<dbReference type="KEGG" id="aas:Aasi_0930"/>
<dbReference type="eggNOG" id="COG0335">
    <property type="taxonomic scope" value="Bacteria"/>
</dbReference>
<dbReference type="HOGENOM" id="CLU_103507_2_2_10"/>
<dbReference type="OrthoDB" id="9803541at2"/>
<dbReference type="Proteomes" id="UP000001227">
    <property type="component" value="Chromosome"/>
</dbReference>
<dbReference type="GO" id="GO:0022625">
    <property type="term" value="C:cytosolic large ribosomal subunit"/>
    <property type="evidence" value="ECO:0007669"/>
    <property type="project" value="TreeGrafter"/>
</dbReference>
<dbReference type="GO" id="GO:0003735">
    <property type="term" value="F:structural constituent of ribosome"/>
    <property type="evidence" value="ECO:0007669"/>
    <property type="project" value="InterPro"/>
</dbReference>
<dbReference type="GO" id="GO:0006412">
    <property type="term" value="P:translation"/>
    <property type="evidence" value="ECO:0007669"/>
    <property type="project" value="UniProtKB-UniRule"/>
</dbReference>
<dbReference type="Gene3D" id="2.30.30.790">
    <property type="match status" value="1"/>
</dbReference>
<dbReference type="HAMAP" id="MF_00402">
    <property type="entry name" value="Ribosomal_bL19"/>
    <property type="match status" value="1"/>
</dbReference>
<dbReference type="InterPro" id="IPR001857">
    <property type="entry name" value="Ribosomal_bL19"/>
</dbReference>
<dbReference type="InterPro" id="IPR038657">
    <property type="entry name" value="Ribosomal_bL19_sf"/>
</dbReference>
<dbReference type="InterPro" id="IPR008991">
    <property type="entry name" value="Translation_prot_SH3-like_sf"/>
</dbReference>
<dbReference type="NCBIfam" id="TIGR01024">
    <property type="entry name" value="rplS_bact"/>
    <property type="match status" value="1"/>
</dbReference>
<dbReference type="PANTHER" id="PTHR15680:SF9">
    <property type="entry name" value="LARGE RIBOSOMAL SUBUNIT PROTEIN BL19M"/>
    <property type="match status" value="1"/>
</dbReference>
<dbReference type="PANTHER" id="PTHR15680">
    <property type="entry name" value="RIBOSOMAL PROTEIN L19"/>
    <property type="match status" value="1"/>
</dbReference>
<dbReference type="Pfam" id="PF01245">
    <property type="entry name" value="Ribosomal_L19"/>
    <property type="match status" value="1"/>
</dbReference>
<dbReference type="PIRSF" id="PIRSF002191">
    <property type="entry name" value="Ribosomal_L19"/>
    <property type="match status" value="1"/>
</dbReference>
<dbReference type="PRINTS" id="PR00061">
    <property type="entry name" value="RIBOSOMALL19"/>
</dbReference>
<dbReference type="SUPFAM" id="SSF50104">
    <property type="entry name" value="Translation proteins SH3-like domain"/>
    <property type="match status" value="1"/>
</dbReference>
<reference key="1">
    <citation type="journal article" date="2010" name="J. Bacteriol.">
        <title>The genome of the amoeba symbiont 'Candidatus Amoebophilus asiaticus' reveals common mechanisms for host cell interaction among amoeba-associated bacteria.</title>
        <authorList>
            <person name="Schmitz-Esser S."/>
            <person name="Tischler P."/>
            <person name="Arnold R."/>
            <person name="Montanaro J."/>
            <person name="Wagner M."/>
            <person name="Rattei T."/>
            <person name="Horn M."/>
        </authorList>
    </citation>
    <scope>NUCLEOTIDE SEQUENCE [LARGE SCALE GENOMIC DNA]</scope>
    <source>
        <strain>5a2</strain>
    </source>
</reference>
<keyword id="KW-1185">Reference proteome</keyword>
<keyword id="KW-0687">Ribonucleoprotein</keyword>
<keyword id="KW-0689">Ribosomal protein</keyword>
<feature type="chain" id="PRO_1000193784" description="Large ribosomal subunit protein bL19">
    <location>
        <begin position="1"/>
        <end position="121"/>
    </location>
</feature>
<sequence length="121" mass="13854">MNELIKMVGIDYTEQRKKFPDFKAGDTINVHIKISEGKKERIQQFQGVVIQRRNPNTNGETFTVRKISEGIGVERIFPLLSPTIEKIELKQQGLVRRARLFYLQGKQGKAARIKAKITSKA</sequence>
<gene>
    <name evidence="1" type="primary">rplS</name>
    <name type="ordered locus">Aasi_0930</name>
</gene>
<organism>
    <name type="scientific">Amoebophilus asiaticus (strain 5a2)</name>
    <dbReference type="NCBI Taxonomy" id="452471"/>
    <lineage>
        <taxon>Bacteria</taxon>
        <taxon>Pseudomonadati</taxon>
        <taxon>Bacteroidota</taxon>
        <taxon>Cytophagia</taxon>
        <taxon>Cytophagales</taxon>
        <taxon>Amoebophilaceae</taxon>
        <taxon>Candidatus Amoebophilus</taxon>
    </lineage>
</organism>
<accession>B3ESU3</accession>